<sequence>MKTLLLTLAVVTMVCMDLGYTTICYNHLSRTPETTEICPDSWYFCYKISLADGNDVRIKRGCTFTCPELRPTGKYVYCCRRDKCNQ</sequence>
<dbReference type="EMBL" id="AJ007764">
    <property type="protein sequence ID" value="CAB50691.1"/>
    <property type="molecule type" value="mRNA"/>
</dbReference>
<dbReference type="SMR" id="Q9W727"/>
<dbReference type="GO" id="GO:0005576">
    <property type="term" value="C:extracellular region"/>
    <property type="evidence" value="ECO:0007669"/>
    <property type="project" value="UniProtKB-SubCell"/>
</dbReference>
<dbReference type="GO" id="GO:0090729">
    <property type="term" value="F:toxin activity"/>
    <property type="evidence" value="ECO:0007669"/>
    <property type="project" value="UniProtKB-KW"/>
</dbReference>
<dbReference type="CDD" id="cd00206">
    <property type="entry name" value="TFP_snake_toxin"/>
    <property type="match status" value="1"/>
</dbReference>
<dbReference type="FunFam" id="2.10.60.10:FF:000024">
    <property type="entry name" value="Cytotoxin 1"/>
    <property type="match status" value="1"/>
</dbReference>
<dbReference type="Gene3D" id="2.10.60.10">
    <property type="entry name" value="CD59"/>
    <property type="match status" value="1"/>
</dbReference>
<dbReference type="InterPro" id="IPR003571">
    <property type="entry name" value="Snake_3FTx"/>
</dbReference>
<dbReference type="InterPro" id="IPR045860">
    <property type="entry name" value="Snake_toxin-like_sf"/>
</dbReference>
<dbReference type="InterPro" id="IPR018354">
    <property type="entry name" value="Snake_toxin_con_site"/>
</dbReference>
<dbReference type="InterPro" id="IPR054131">
    <property type="entry name" value="Toxin_cobra-type"/>
</dbReference>
<dbReference type="Pfam" id="PF21947">
    <property type="entry name" value="Toxin_cobra-type"/>
    <property type="match status" value="1"/>
</dbReference>
<dbReference type="SUPFAM" id="SSF57302">
    <property type="entry name" value="Snake toxin-like"/>
    <property type="match status" value="1"/>
</dbReference>
<dbReference type="PROSITE" id="PS00272">
    <property type="entry name" value="SNAKE_TOXIN"/>
    <property type="match status" value="1"/>
</dbReference>
<proteinExistence type="inferred from homology"/>
<comment type="function">
    <text evidence="2">Antagonist of muscle and neuronal nicotinic acetylcholine receptors (nAChR) with highest affinity for neuronal alpha-7/CHRNA7 nAChRs.</text>
</comment>
<comment type="subunit">
    <text evidence="2">Homodimer; non-covalently linked.</text>
</comment>
<comment type="subcellular location">
    <subcellularLocation>
        <location evidence="2">Secreted</location>
    </subcellularLocation>
</comment>
<comment type="tissue specificity">
    <text evidence="4">Expressed by the venom gland.</text>
</comment>
<comment type="similarity">
    <text evidence="4">Belongs to the three-finger toxin family. Short-chain subfamily. Orphan group VIII (haditoxin) sub-subfamily.</text>
</comment>
<name>3SO8_BUNMU</name>
<keyword id="KW-1015">Disulfide bond</keyword>
<keyword id="KW-1214">G-protein coupled acetylcholine receptor impairing toxin</keyword>
<keyword id="KW-1213">G-protein coupled receptor impairing toxin</keyword>
<keyword id="KW-0528">Neurotoxin</keyword>
<keyword id="KW-0629">Postsynaptic neurotoxin</keyword>
<keyword id="KW-0964">Secreted</keyword>
<keyword id="KW-0732">Signal</keyword>
<keyword id="KW-0800">Toxin</keyword>
<evidence type="ECO:0000250" key="1"/>
<evidence type="ECO:0000250" key="2">
    <source>
        <dbReference type="UniProtKB" id="A8N286"/>
    </source>
</evidence>
<evidence type="ECO:0000250" key="3">
    <source>
        <dbReference type="UniProtKB" id="P60301"/>
    </source>
</evidence>
<evidence type="ECO:0000305" key="4"/>
<organism>
    <name type="scientific">Bungarus multicinctus</name>
    <name type="common">Many-banded krait</name>
    <dbReference type="NCBI Taxonomy" id="8616"/>
    <lineage>
        <taxon>Eukaryota</taxon>
        <taxon>Metazoa</taxon>
        <taxon>Chordata</taxon>
        <taxon>Craniata</taxon>
        <taxon>Vertebrata</taxon>
        <taxon>Euteleostomi</taxon>
        <taxon>Lepidosauria</taxon>
        <taxon>Squamata</taxon>
        <taxon>Bifurcata</taxon>
        <taxon>Unidentata</taxon>
        <taxon>Episquamata</taxon>
        <taxon>Toxicofera</taxon>
        <taxon>Serpentes</taxon>
        <taxon>Colubroidea</taxon>
        <taxon>Elapidae</taxon>
        <taxon>Bungarinae</taxon>
        <taxon>Bungarus</taxon>
    </lineage>
</organism>
<feature type="signal peptide" evidence="1">
    <location>
        <begin position="1"/>
        <end position="21"/>
    </location>
</feature>
<feature type="chain" id="PRO_0000035482" description="Muscarinic toxin-like protein">
    <location>
        <begin position="22"/>
        <end position="86"/>
    </location>
</feature>
<feature type="disulfide bond" evidence="3">
    <location>
        <begin position="24"/>
        <end position="45"/>
    </location>
</feature>
<feature type="disulfide bond" evidence="3">
    <location>
        <begin position="38"/>
        <end position="62"/>
    </location>
</feature>
<feature type="disulfide bond" evidence="3">
    <location>
        <begin position="66"/>
        <end position="78"/>
    </location>
</feature>
<feature type="disulfide bond" evidence="3">
    <location>
        <begin position="79"/>
        <end position="84"/>
    </location>
</feature>
<accession>Q9W727</accession>
<protein>
    <recommendedName>
        <fullName>Muscarinic toxin-like protein</fullName>
    </recommendedName>
</protein>
<reference key="1">
    <citation type="submission" date="1998-07" db="EMBL/GenBank/DDBJ databases">
        <title>Molecular cloning of neurotoxin-like proteins from Bungarus multicinctus multicinctus.</title>
        <authorList>
            <person name="Qian Y.C."/>
            <person name="Fang C.Y."/>
            <person name="Gong Y."/>
            <person name="Yang S.-L."/>
        </authorList>
    </citation>
    <scope>NUCLEOTIDE SEQUENCE [MRNA]</scope>
    <source>
        <tissue>Venom gland</tissue>
    </source>
</reference>